<evidence type="ECO:0000255" key="1">
    <source>
        <dbReference type="HAMAP-Rule" id="MF_00238"/>
    </source>
</evidence>
<accession>Q2NUA8</accession>
<name>KCY_SODGM</name>
<protein>
    <recommendedName>
        <fullName evidence="1">Cytidylate kinase</fullName>
        <shortName evidence="1">CK</shortName>
        <ecNumber evidence="1">2.7.4.25</ecNumber>
    </recommendedName>
    <alternativeName>
        <fullName evidence="1">Cytidine monophosphate kinase</fullName>
        <shortName evidence="1">CMP kinase</shortName>
    </alternativeName>
</protein>
<proteinExistence type="inferred from homology"/>
<dbReference type="EC" id="2.7.4.25" evidence="1"/>
<dbReference type="EMBL" id="AP008232">
    <property type="protein sequence ID" value="BAE74267.1"/>
    <property type="molecule type" value="Genomic_DNA"/>
</dbReference>
<dbReference type="RefSeq" id="WP_011410853.1">
    <property type="nucleotide sequence ID" value="NC_007712.1"/>
</dbReference>
<dbReference type="SMR" id="Q2NUA8"/>
<dbReference type="STRING" id="343509.SG0992"/>
<dbReference type="KEGG" id="sgl:SG0992"/>
<dbReference type="eggNOG" id="COG0283">
    <property type="taxonomic scope" value="Bacteria"/>
</dbReference>
<dbReference type="HOGENOM" id="CLU_079959_2_0_6"/>
<dbReference type="OrthoDB" id="9807434at2"/>
<dbReference type="BioCyc" id="SGLO343509:SGP1_RS08480-MONOMER"/>
<dbReference type="Proteomes" id="UP000001932">
    <property type="component" value="Chromosome"/>
</dbReference>
<dbReference type="GO" id="GO:0005829">
    <property type="term" value="C:cytosol"/>
    <property type="evidence" value="ECO:0007669"/>
    <property type="project" value="TreeGrafter"/>
</dbReference>
<dbReference type="GO" id="GO:0005524">
    <property type="term" value="F:ATP binding"/>
    <property type="evidence" value="ECO:0007669"/>
    <property type="project" value="UniProtKB-UniRule"/>
</dbReference>
<dbReference type="GO" id="GO:0036430">
    <property type="term" value="F:CMP kinase activity"/>
    <property type="evidence" value="ECO:0007669"/>
    <property type="project" value="RHEA"/>
</dbReference>
<dbReference type="GO" id="GO:0036431">
    <property type="term" value="F:dCMP kinase activity"/>
    <property type="evidence" value="ECO:0007669"/>
    <property type="project" value="RHEA"/>
</dbReference>
<dbReference type="GO" id="GO:0015949">
    <property type="term" value="P:nucleobase-containing small molecule interconversion"/>
    <property type="evidence" value="ECO:0007669"/>
    <property type="project" value="TreeGrafter"/>
</dbReference>
<dbReference type="GO" id="GO:0006220">
    <property type="term" value="P:pyrimidine nucleotide metabolic process"/>
    <property type="evidence" value="ECO:0007669"/>
    <property type="project" value="UniProtKB-UniRule"/>
</dbReference>
<dbReference type="CDD" id="cd02020">
    <property type="entry name" value="CMPK"/>
    <property type="match status" value="1"/>
</dbReference>
<dbReference type="FunFam" id="3.40.50.300:FF:000262">
    <property type="entry name" value="Cytidylate kinase"/>
    <property type="match status" value="1"/>
</dbReference>
<dbReference type="Gene3D" id="3.40.50.300">
    <property type="entry name" value="P-loop containing nucleotide triphosphate hydrolases"/>
    <property type="match status" value="1"/>
</dbReference>
<dbReference type="HAMAP" id="MF_00238">
    <property type="entry name" value="Cytidyl_kinase_type1"/>
    <property type="match status" value="1"/>
</dbReference>
<dbReference type="InterPro" id="IPR003136">
    <property type="entry name" value="Cytidylate_kin"/>
</dbReference>
<dbReference type="InterPro" id="IPR011994">
    <property type="entry name" value="Cytidylate_kinase_dom"/>
</dbReference>
<dbReference type="InterPro" id="IPR027417">
    <property type="entry name" value="P-loop_NTPase"/>
</dbReference>
<dbReference type="NCBIfam" id="TIGR00017">
    <property type="entry name" value="cmk"/>
    <property type="match status" value="1"/>
</dbReference>
<dbReference type="PANTHER" id="PTHR21299:SF2">
    <property type="entry name" value="CYTIDYLATE KINASE"/>
    <property type="match status" value="1"/>
</dbReference>
<dbReference type="PANTHER" id="PTHR21299">
    <property type="entry name" value="CYTIDYLATE KINASE/PANTOATE-BETA-ALANINE LIGASE"/>
    <property type="match status" value="1"/>
</dbReference>
<dbReference type="Pfam" id="PF02224">
    <property type="entry name" value="Cytidylate_kin"/>
    <property type="match status" value="1"/>
</dbReference>
<dbReference type="SUPFAM" id="SSF52540">
    <property type="entry name" value="P-loop containing nucleoside triphosphate hydrolases"/>
    <property type="match status" value="1"/>
</dbReference>
<organism>
    <name type="scientific">Sodalis glossinidius (strain morsitans)</name>
    <dbReference type="NCBI Taxonomy" id="343509"/>
    <lineage>
        <taxon>Bacteria</taxon>
        <taxon>Pseudomonadati</taxon>
        <taxon>Pseudomonadota</taxon>
        <taxon>Gammaproteobacteria</taxon>
        <taxon>Enterobacterales</taxon>
        <taxon>Bruguierivoracaceae</taxon>
        <taxon>Sodalis</taxon>
    </lineage>
</organism>
<gene>
    <name evidence="1" type="primary">cmk</name>
    <name type="ordered locus">SG0992</name>
</gene>
<reference key="1">
    <citation type="journal article" date="2006" name="Genome Res.">
        <title>Massive genome erosion and functional adaptations provide insights into the symbiotic lifestyle of Sodalis glossinidius in the tsetse host.</title>
        <authorList>
            <person name="Toh H."/>
            <person name="Weiss B.L."/>
            <person name="Perkin S.A.H."/>
            <person name="Yamashita A."/>
            <person name="Oshima K."/>
            <person name="Hattori M."/>
            <person name="Aksoy S."/>
        </authorList>
    </citation>
    <scope>NUCLEOTIDE SEQUENCE [LARGE SCALE GENOMIC DNA]</scope>
    <source>
        <strain>morsitans</strain>
    </source>
</reference>
<sequence>MTVIAPVITIDGPSGAGKGTLCKALAETLQWHLLDSGAIYRVLVLAALHHQVAIDSEEALVPLATHLDVRFEVEQGKLSVVLEGEDVSQAIRNETVGNTASQIAAFPRVREALLRRQRAFRAAPGLIADGRDMGTVVFPDAPVKIFLDASSDERAYRRMRQLQEKGFSVNFERLLSEIKERDDRDRNRAVAPLVPAADALVLDSTRLTIDEVIAKALAHARQILALS</sequence>
<feature type="chain" id="PRO_1000048287" description="Cytidylate kinase">
    <location>
        <begin position="1"/>
        <end position="227"/>
    </location>
</feature>
<feature type="binding site" evidence="1">
    <location>
        <begin position="12"/>
        <end position="20"/>
    </location>
    <ligand>
        <name>ATP</name>
        <dbReference type="ChEBI" id="CHEBI:30616"/>
    </ligand>
</feature>
<comment type="catalytic activity">
    <reaction evidence="1">
        <text>CMP + ATP = CDP + ADP</text>
        <dbReference type="Rhea" id="RHEA:11600"/>
        <dbReference type="ChEBI" id="CHEBI:30616"/>
        <dbReference type="ChEBI" id="CHEBI:58069"/>
        <dbReference type="ChEBI" id="CHEBI:60377"/>
        <dbReference type="ChEBI" id="CHEBI:456216"/>
        <dbReference type="EC" id="2.7.4.25"/>
    </reaction>
</comment>
<comment type="catalytic activity">
    <reaction evidence="1">
        <text>dCMP + ATP = dCDP + ADP</text>
        <dbReference type="Rhea" id="RHEA:25094"/>
        <dbReference type="ChEBI" id="CHEBI:30616"/>
        <dbReference type="ChEBI" id="CHEBI:57566"/>
        <dbReference type="ChEBI" id="CHEBI:58593"/>
        <dbReference type="ChEBI" id="CHEBI:456216"/>
        <dbReference type="EC" id="2.7.4.25"/>
    </reaction>
</comment>
<comment type="subcellular location">
    <subcellularLocation>
        <location evidence="1">Cytoplasm</location>
    </subcellularLocation>
</comment>
<comment type="similarity">
    <text evidence="1">Belongs to the cytidylate kinase family. Type 1 subfamily.</text>
</comment>
<keyword id="KW-0067">ATP-binding</keyword>
<keyword id="KW-0963">Cytoplasm</keyword>
<keyword id="KW-0418">Kinase</keyword>
<keyword id="KW-0547">Nucleotide-binding</keyword>
<keyword id="KW-0808">Transferase</keyword>